<dbReference type="EMBL" id="CP000253">
    <property type="protein sequence ID" value="ABD31330.1"/>
    <property type="molecule type" value="Genomic_DNA"/>
</dbReference>
<dbReference type="RefSeq" id="WP_001058111.1">
    <property type="nucleotide sequence ID" value="NZ_LS483365.1"/>
</dbReference>
<dbReference type="RefSeq" id="YP_500774.1">
    <property type="nucleotide sequence ID" value="NC_007795.1"/>
</dbReference>
<dbReference type="STRING" id="93061.SAOUHSC_02296"/>
<dbReference type="PaxDb" id="1280-SAXN108_2307"/>
<dbReference type="GeneID" id="3919167"/>
<dbReference type="KEGG" id="sao:SAOUHSC_02296"/>
<dbReference type="PATRIC" id="fig|93061.5.peg.2080"/>
<dbReference type="eggNOG" id="COG3091">
    <property type="taxonomic scope" value="Bacteria"/>
</dbReference>
<dbReference type="HOGENOM" id="CLU_123820_0_0_9"/>
<dbReference type="OrthoDB" id="9799909at2"/>
<dbReference type="PRO" id="PR:Q2FWJ6"/>
<dbReference type="Proteomes" id="UP000008816">
    <property type="component" value="Chromosome"/>
</dbReference>
<dbReference type="GO" id="GO:0005737">
    <property type="term" value="C:cytoplasm"/>
    <property type="evidence" value="ECO:0007669"/>
    <property type="project" value="UniProtKB-SubCell"/>
</dbReference>
<dbReference type="GO" id="GO:0008270">
    <property type="term" value="F:zinc ion binding"/>
    <property type="evidence" value="ECO:0007669"/>
    <property type="project" value="UniProtKB-UniRule"/>
</dbReference>
<dbReference type="GO" id="GO:0006950">
    <property type="term" value="P:response to stress"/>
    <property type="evidence" value="ECO:0007669"/>
    <property type="project" value="UniProtKB-ARBA"/>
</dbReference>
<dbReference type="HAMAP" id="MF_00745">
    <property type="entry name" value="SprT_like"/>
    <property type="match status" value="1"/>
</dbReference>
<dbReference type="InterPro" id="IPR006640">
    <property type="entry name" value="SprT-like_domain"/>
</dbReference>
<dbReference type="InterPro" id="IPR035240">
    <property type="entry name" value="SprT_Zn_ribbon"/>
</dbReference>
<dbReference type="InterPro" id="IPR023524">
    <property type="entry name" value="Uncharacterised_SprT-like"/>
</dbReference>
<dbReference type="NCBIfam" id="NF003339">
    <property type="entry name" value="PRK04351.1"/>
    <property type="match status" value="1"/>
</dbReference>
<dbReference type="Pfam" id="PF10263">
    <property type="entry name" value="SprT-like"/>
    <property type="match status" value="1"/>
</dbReference>
<dbReference type="Pfam" id="PF17283">
    <property type="entry name" value="Zn_ribbon_SprT"/>
    <property type="match status" value="1"/>
</dbReference>
<dbReference type="SMART" id="SM00731">
    <property type="entry name" value="SprT"/>
    <property type="match status" value="1"/>
</dbReference>
<keyword id="KW-0963">Cytoplasm</keyword>
<keyword id="KW-0479">Metal-binding</keyword>
<keyword id="KW-1185">Reference proteome</keyword>
<keyword id="KW-0862">Zinc</keyword>
<name>SPRTL_STAA8</name>
<evidence type="ECO:0000255" key="1">
    <source>
        <dbReference type="HAMAP-Rule" id="MF_00745"/>
    </source>
</evidence>
<gene>
    <name type="ordered locus">SAOUHSC_02296</name>
</gene>
<feature type="chain" id="PRO_1000046516" description="Protein SprT-like">
    <location>
        <begin position="1"/>
        <end position="151"/>
    </location>
</feature>
<feature type="domain" description="SprT-like" evidence="1">
    <location>
        <begin position="6"/>
        <end position="147"/>
    </location>
</feature>
<feature type="active site" evidence="1">
    <location>
        <position position="68"/>
    </location>
</feature>
<feature type="binding site" evidence="1">
    <location>
        <position position="67"/>
    </location>
    <ligand>
        <name>Zn(2+)</name>
        <dbReference type="ChEBI" id="CHEBI:29105"/>
    </ligand>
</feature>
<feature type="binding site" evidence="1">
    <location>
        <position position="71"/>
    </location>
    <ligand>
        <name>Zn(2+)</name>
        <dbReference type="ChEBI" id="CHEBI:29105"/>
    </ligand>
</feature>
<comment type="cofactor">
    <cofactor evidence="1">
        <name>Zn(2+)</name>
        <dbReference type="ChEBI" id="CHEBI:29105"/>
    </cofactor>
    <text evidence="1">Binds 1 zinc ion.</text>
</comment>
<comment type="subcellular location">
    <subcellularLocation>
        <location evidence="1">Cytoplasm</location>
    </subcellularLocation>
</comment>
<comment type="similarity">
    <text evidence="1">Belongs to the SprT family.</text>
</comment>
<protein>
    <recommendedName>
        <fullName evidence="1">Protein SprT-like</fullName>
    </recommendedName>
</protein>
<sequence length="151" mass="18186">MNNDKLQRMVENLSEEKFGRTFRHCAYFNKRLRTTGGRYLLKSHDIEINPKQYEHYGEDAVVKIILHELCHYHLHIAGKGYQHKDQDFKRLSQQVGAPRFCNSIESYQQRANYEYYCTKCHAKYIRIRKVDTNRMRCGHCNGKLRMKRQLK</sequence>
<proteinExistence type="inferred from homology"/>
<accession>Q2FWJ6</accession>
<organism>
    <name type="scientific">Staphylococcus aureus (strain NCTC 8325 / PS 47)</name>
    <dbReference type="NCBI Taxonomy" id="93061"/>
    <lineage>
        <taxon>Bacteria</taxon>
        <taxon>Bacillati</taxon>
        <taxon>Bacillota</taxon>
        <taxon>Bacilli</taxon>
        <taxon>Bacillales</taxon>
        <taxon>Staphylococcaceae</taxon>
        <taxon>Staphylococcus</taxon>
    </lineage>
</organism>
<reference key="1">
    <citation type="book" date="2006" name="Gram positive pathogens, 2nd edition">
        <title>The Staphylococcus aureus NCTC 8325 genome.</title>
        <editorList>
            <person name="Fischetti V."/>
            <person name="Novick R."/>
            <person name="Ferretti J."/>
            <person name="Portnoy D."/>
            <person name="Rood J."/>
        </editorList>
        <authorList>
            <person name="Gillaspy A.F."/>
            <person name="Worrell V."/>
            <person name="Orvis J."/>
            <person name="Roe B.A."/>
            <person name="Dyer D.W."/>
            <person name="Iandolo J.J."/>
        </authorList>
    </citation>
    <scope>NUCLEOTIDE SEQUENCE [LARGE SCALE GENOMIC DNA]</scope>
    <source>
        <strain>NCTC 8325 / PS 47</strain>
    </source>
</reference>